<name>MAUJ_PARDE</name>
<organism>
    <name type="scientific">Paracoccus denitrificans</name>
    <dbReference type="NCBI Taxonomy" id="266"/>
    <lineage>
        <taxon>Bacteria</taxon>
        <taxon>Pseudomonadati</taxon>
        <taxon>Pseudomonadota</taxon>
        <taxon>Alphaproteobacteria</taxon>
        <taxon>Rhodobacterales</taxon>
        <taxon>Paracoccaceae</taxon>
        <taxon>Paracoccus</taxon>
    </lineage>
</organism>
<feature type="chain" id="PRO_0000208943" description="Methylamine utilization protein MauJ">
    <location>
        <begin position="1"/>
        <end position="287"/>
    </location>
</feature>
<sequence>MWIPYDIRGSLKPESPAGTIRLSRTDTSPREFLVGFFLRNPVTQAWELDIAVPASGLELALPGPGSPLPLRIYGNEAGKLAEAILRITAPSAETALAQAHGVLQAWLLRQVVETGRGMAIAGWRIADPAHEARWRCTPFRPSAMSPDFVAQVPLAPDLLPLAELFQRARNAPDAASRMLAAYAVLCGLRDRPVASDFRVTQEMLIHAGAMEHQAGLQGLDLAALIAALRPEHDRLIAPGGLLAALSDDLAAQQRLARLANLADLAAHRLLLAQIRTRAPAPQPMGAA</sequence>
<reference key="1">
    <citation type="journal article" date="1990" name="FEBS Lett.">
        <title>Mutagenesis of the gene encoding amicyanin of Paracoccus denitrificans and the resultant effect on methylamine oxidation.</title>
        <authorList>
            <person name="van Spanning R.J.M."/>
            <person name="Wansell C.W."/>
            <person name="Reijnders W.N.M."/>
            <person name="Oltmann L.F."/>
            <person name="Stouthamer A.H."/>
        </authorList>
    </citation>
    <scope>NUCLEOTIDE SEQUENCE [GENOMIC DNA] OF 1-32</scope>
    <source>
        <strain>ATCC 19367 / NBRC 13301 / NCIMB 8944 / NRRL B-3785</strain>
    </source>
</reference>
<reference key="2">
    <citation type="journal article" date="1995" name="Eur. J. Biochem.">
        <title>Mutational analysis of mau genes involved in methylamine metabolism in Paracoccus denitrificans.</title>
        <authorList>
            <person name="van der Palen C.J."/>
            <person name="Slotboom D.J."/>
            <person name="Jongejan L."/>
            <person name="Reijnders W.N."/>
            <person name="Harms N."/>
            <person name="Duine J.A."/>
            <person name="van Spanning R.J."/>
        </authorList>
    </citation>
    <scope>NUCLEOTIDE SEQUENCE [GENOMIC DNA] OF 31-287</scope>
    <source>
        <strain>Pd 1222</strain>
    </source>
</reference>
<dbReference type="EMBL" id="X55665">
    <property type="protein sequence ID" value="CAA39200.1"/>
    <property type="molecule type" value="Genomic_DNA"/>
</dbReference>
<dbReference type="EMBL" id="U15028">
    <property type="protein sequence ID" value="AAA86466.1"/>
    <property type="molecule type" value="Genomic_DNA"/>
</dbReference>
<dbReference type="PIR" id="S12973">
    <property type="entry name" value="S12973"/>
</dbReference>
<dbReference type="PIR" id="S65958">
    <property type="entry name" value="S65958"/>
</dbReference>
<dbReference type="RefSeq" id="WP_011750955.1">
    <property type="nucleotide sequence ID" value="NZ_JAOSHR010000003.1"/>
</dbReference>
<dbReference type="GeneID" id="93454757"/>
<dbReference type="OMA" id="WRCTPFR"/>
<dbReference type="UniPathway" id="UPA00895"/>
<dbReference type="InterPro" id="IPR035383">
    <property type="entry name" value="MauJ"/>
</dbReference>
<dbReference type="Pfam" id="PF17419">
    <property type="entry name" value="MauJ"/>
    <property type="match status" value="1"/>
</dbReference>
<protein>
    <recommendedName>
        <fullName>Methylamine utilization protein MauJ</fullName>
    </recommendedName>
</protein>
<comment type="pathway">
    <text>One-carbon metabolism; methylamine degradation.</text>
</comment>
<proteinExistence type="predicted"/>
<gene>
    <name type="primary">mauJ</name>
</gene>
<accession>P22566</accession>
<accession>Q51657</accession>